<feature type="chain" id="PRO_0000196096" description="Cuticle protein 16.5, isoform A">
    <location>
        <begin position="1"/>
        <end position="175"/>
    </location>
</feature>
<feature type="repeat" description="1" evidence="2">
    <location>
        <begin position="17"/>
        <end position="20"/>
    </location>
</feature>
<feature type="repeat" description="2" evidence="2">
    <location>
        <begin position="25"/>
        <end position="28"/>
    </location>
</feature>
<feature type="repeat" description="3" evidence="2">
    <location>
        <begin position="31"/>
        <end position="34"/>
    </location>
</feature>
<feature type="repeat" description="4" evidence="2">
    <location>
        <begin position="38"/>
        <end position="41"/>
    </location>
</feature>
<feature type="repeat" description="5" evidence="2">
    <location>
        <begin position="44"/>
        <end position="47"/>
    </location>
</feature>
<feature type="repeat" description="6" evidence="2">
    <location>
        <begin position="51"/>
        <end position="54"/>
    </location>
</feature>
<feature type="repeat" description="7" evidence="2">
    <location>
        <begin position="57"/>
        <end position="60"/>
    </location>
</feature>
<feature type="repeat" description="8" evidence="2">
    <location>
        <begin position="64"/>
        <end position="67"/>
    </location>
</feature>
<feature type="repeat" description="9" evidence="2">
    <location>
        <begin position="70"/>
        <end position="73"/>
    </location>
</feature>
<feature type="repeat" description="10" evidence="2">
    <location>
        <begin position="77"/>
        <end position="80"/>
    </location>
</feature>
<feature type="repeat" description="11" evidence="2">
    <location>
        <begin position="83"/>
        <end position="86"/>
    </location>
</feature>
<feature type="repeat" description="12" evidence="2">
    <location>
        <begin position="91"/>
        <end position="94"/>
    </location>
</feature>
<feature type="repeat" description="13" evidence="2">
    <location>
        <begin position="99"/>
        <end position="102"/>
    </location>
</feature>
<feature type="repeat" description="14" evidence="2">
    <location>
        <begin position="106"/>
        <end position="109"/>
    </location>
</feature>
<feature type="repeat" description="15" evidence="2">
    <location>
        <begin position="134"/>
        <end position="137"/>
    </location>
</feature>
<feature type="repeat" description="16" evidence="2">
    <location>
        <begin position="144"/>
        <end position="147"/>
    </location>
</feature>
<feature type="repeat" description="17" evidence="2">
    <location>
        <begin position="151"/>
        <end position="154"/>
    </location>
</feature>
<feature type="repeat" description="18" evidence="2">
    <location>
        <begin position="158"/>
        <end position="161"/>
    </location>
</feature>
<feature type="repeat" description="19" evidence="2">
    <location>
        <begin position="165"/>
        <end position="168"/>
    </location>
</feature>
<name>CU16A_LOCMI</name>
<evidence type="ECO:0000269" key="1">
    <source>
    </source>
</evidence>
<evidence type="ECO:0000305" key="2"/>
<sequence>GLLGLGYGGYGYGAALAAPAAVSYAAPAIAAAPAVSYAAPAIAAAPAVSYAAPAIAAAPAISYAAPAIAAAPAVSYAAPAIAAAPAISYAAAPAIRYAAAPAIRYAAPAVARVAPAISYAAVAVARVAPALSYAAPALSYARYAAPALSYAAPAVSYAAPAISYAAPAIAKYALH</sequence>
<reference evidence="2" key="1">
    <citation type="journal article" date="2003" name="Biochim. Biophys. Acta">
        <title>Sequence determination of three cuticular proteins and isoforms from the migratory locust, Locusta migratoria, using a combination of Edman degradation and mass spectrometric techniques.</title>
        <authorList>
            <person name="Kalume D.E."/>
            <person name="Kieffer S."/>
            <person name="Rafn K."/>
            <person name="Skou L."/>
            <person name="Andersen S.O."/>
            <person name="Roepstorff P."/>
        </authorList>
    </citation>
    <scope>PROTEIN SEQUENCE</scope>
    <scope>FUNCTION</scope>
    <scope>MASS SPECTROMETRY</scope>
    <source>
        <tissue evidence="1">Pharate adult cuticle</tissue>
    </source>
</reference>
<keyword id="KW-0193">Cuticle</keyword>
<keyword id="KW-0903">Direct protein sequencing</keyword>
<keyword id="KW-0677">Repeat</keyword>
<protein>
    <recommendedName>
        <fullName>Cuticle protein 16.5, isoform A</fullName>
    </recommendedName>
    <alternativeName>
        <fullName>LM-ACP 16.5A</fullName>
        <shortName>LM-16.5A</shortName>
    </alternativeName>
</protein>
<dbReference type="GO" id="GO:0042302">
    <property type="term" value="F:structural constituent of cuticle"/>
    <property type="evidence" value="ECO:0007669"/>
    <property type="project" value="UniProtKB-KW"/>
</dbReference>
<organism>
    <name type="scientific">Locusta migratoria</name>
    <name type="common">Migratory locust</name>
    <dbReference type="NCBI Taxonomy" id="7004"/>
    <lineage>
        <taxon>Eukaryota</taxon>
        <taxon>Metazoa</taxon>
        <taxon>Ecdysozoa</taxon>
        <taxon>Arthropoda</taxon>
        <taxon>Hexapoda</taxon>
        <taxon>Insecta</taxon>
        <taxon>Pterygota</taxon>
        <taxon>Neoptera</taxon>
        <taxon>Polyneoptera</taxon>
        <taxon>Orthoptera</taxon>
        <taxon>Caelifera</taxon>
        <taxon>Acrididea</taxon>
        <taxon>Acridomorpha</taxon>
        <taxon>Acridoidea</taxon>
        <taxon>Acrididae</taxon>
        <taxon>Oedipodinae</taxon>
        <taxon>Locusta</taxon>
    </lineage>
</organism>
<proteinExistence type="evidence at protein level"/>
<accession>P83992</accession>
<comment type="function">
    <text evidence="1">Component of the cuticle of migratory locust which contains more than 100 different structural proteins.</text>
</comment>
<comment type="domain">
    <text evidence="2">The tetrapeptide (A-A-P-[AV]) repeats found throughout the protein are also present in many proteins constituting the protective envelope of other species.</text>
</comment>
<comment type="mass spectrometry"/>
<comment type="mass spectrometry"/>